<dbReference type="EC" id="1.97.1.12" evidence="2"/>
<dbReference type="EMBL" id="EF137812">
    <property type="protein sequence ID" value="ABL95203.1"/>
    <property type="molecule type" value="Genomic_DNA"/>
</dbReference>
<dbReference type="RefSeq" id="YP_008239223.1">
    <property type="nucleotide sequence ID" value="NC_021761.1"/>
</dbReference>
<dbReference type="SMR" id="A1YV30"/>
<dbReference type="EnsemblPlants" id="SECCEUnv1G0560820.1">
    <property type="protein sequence ID" value="SECCEUnv1G0560820.1.CDS.1"/>
    <property type="gene ID" value="SECCEUnv1G0560820"/>
</dbReference>
<dbReference type="EnsemblPlants" id="SECCEUnv1G0571320.1">
    <property type="protein sequence ID" value="SECCEUnv1G0571320.1.CDS.1"/>
    <property type="gene ID" value="SECCEUnv1G0571320"/>
</dbReference>
<dbReference type="GeneID" id="16792693"/>
<dbReference type="Gramene" id="SECCEUnv1G0560820.1">
    <property type="protein sequence ID" value="SECCEUnv1G0560820.1.CDS.1"/>
    <property type="gene ID" value="SECCEUnv1G0560820"/>
</dbReference>
<dbReference type="Gramene" id="SECCEUnv1G0571320.1">
    <property type="protein sequence ID" value="SECCEUnv1G0571320.1.CDS.1"/>
    <property type="gene ID" value="SECCEUnv1G0571320"/>
</dbReference>
<dbReference type="GO" id="GO:0009535">
    <property type="term" value="C:chloroplast thylakoid membrane"/>
    <property type="evidence" value="ECO:0007669"/>
    <property type="project" value="UniProtKB-SubCell"/>
</dbReference>
<dbReference type="GO" id="GO:0009522">
    <property type="term" value="C:photosystem I"/>
    <property type="evidence" value="ECO:0007669"/>
    <property type="project" value="UniProtKB-KW"/>
</dbReference>
<dbReference type="GO" id="GO:0051539">
    <property type="term" value="F:4 iron, 4 sulfur cluster binding"/>
    <property type="evidence" value="ECO:0007669"/>
    <property type="project" value="UniProtKB-KW"/>
</dbReference>
<dbReference type="GO" id="GO:0009055">
    <property type="term" value="F:electron transfer activity"/>
    <property type="evidence" value="ECO:0007669"/>
    <property type="project" value="UniProtKB-UniRule"/>
</dbReference>
<dbReference type="GO" id="GO:0046872">
    <property type="term" value="F:metal ion binding"/>
    <property type="evidence" value="ECO:0007669"/>
    <property type="project" value="UniProtKB-KW"/>
</dbReference>
<dbReference type="GO" id="GO:0016491">
    <property type="term" value="F:oxidoreductase activity"/>
    <property type="evidence" value="ECO:0007669"/>
    <property type="project" value="UniProtKB-KW"/>
</dbReference>
<dbReference type="GO" id="GO:0009773">
    <property type="term" value="P:photosynthetic electron transport in photosystem I"/>
    <property type="evidence" value="ECO:0007669"/>
    <property type="project" value="InterPro"/>
</dbReference>
<dbReference type="FunFam" id="3.30.70.20:FF:000001">
    <property type="entry name" value="Photosystem I iron-sulfur center"/>
    <property type="match status" value="1"/>
</dbReference>
<dbReference type="Gene3D" id="3.30.70.20">
    <property type="match status" value="1"/>
</dbReference>
<dbReference type="HAMAP" id="MF_01303">
    <property type="entry name" value="PSI_PsaC"/>
    <property type="match status" value="1"/>
</dbReference>
<dbReference type="InterPro" id="IPR017896">
    <property type="entry name" value="4Fe4S_Fe-S-bd"/>
</dbReference>
<dbReference type="InterPro" id="IPR017900">
    <property type="entry name" value="4Fe4S_Fe_S_CS"/>
</dbReference>
<dbReference type="InterPro" id="IPR050157">
    <property type="entry name" value="PSI_iron-sulfur_center"/>
</dbReference>
<dbReference type="InterPro" id="IPR017491">
    <property type="entry name" value="PSI_PsaC"/>
</dbReference>
<dbReference type="NCBIfam" id="TIGR03048">
    <property type="entry name" value="PS_I_psaC"/>
    <property type="match status" value="1"/>
</dbReference>
<dbReference type="PANTHER" id="PTHR24960:SF79">
    <property type="entry name" value="PHOTOSYSTEM I IRON-SULFUR CENTER"/>
    <property type="match status" value="1"/>
</dbReference>
<dbReference type="PANTHER" id="PTHR24960">
    <property type="entry name" value="PHOTOSYSTEM I IRON-SULFUR CENTER-RELATED"/>
    <property type="match status" value="1"/>
</dbReference>
<dbReference type="Pfam" id="PF12838">
    <property type="entry name" value="Fer4_7"/>
    <property type="match status" value="1"/>
</dbReference>
<dbReference type="SUPFAM" id="SSF54862">
    <property type="entry name" value="4Fe-4S ferredoxins"/>
    <property type="match status" value="1"/>
</dbReference>
<dbReference type="PROSITE" id="PS00198">
    <property type="entry name" value="4FE4S_FER_1"/>
    <property type="match status" value="2"/>
</dbReference>
<dbReference type="PROSITE" id="PS51379">
    <property type="entry name" value="4FE4S_FER_2"/>
    <property type="match status" value="2"/>
</dbReference>
<feature type="initiator methionine" description="Removed" evidence="1">
    <location>
        <position position="1"/>
    </location>
</feature>
<feature type="chain" id="PRO_0000292130" description="Photosystem I iron-sulfur center">
    <location>
        <begin position="2"/>
        <end position="81"/>
    </location>
</feature>
<feature type="domain" description="4Fe-4S ferredoxin-type 1" evidence="2">
    <location>
        <begin position="2"/>
        <end position="31"/>
    </location>
</feature>
<feature type="domain" description="4Fe-4S ferredoxin-type 2" evidence="2">
    <location>
        <begin position="39"/>
        <end position="68"/>
    </location>
</feature>
<feature type="binding site" evidence="2">
    <location>
        <position position="11"/>
    </location>
    <ligand>
        <name>[4Fe-4S] cluster</name>
        <dbReference type="ChEBI" id="CHEBI:49883"/>
        <label>1</label>
    </ligand>
</feature>
<feature type="binding site" evidence="2">
    <location>
        <position position="14"/>
    </location>
    <ligand>
        <name>[4Fe-4S] cluster</name>
        <dbReference type="ChEBI" id="CHEBI:49883"/>
        <label>1</label>
    </ligand>
</feature>
<feature type="binding site" evidence="2">
    <location>
        <position position="17"/>
    </location>
    <ligand>
        <name>[4Fe-4S] cluster</name>
        <dbReference type="ChEBI" id="CHEBI:49883"/>
        <label>1</label>
    </ligand>
</feature>
<feature type="binding site" evidence="2">
    <location>
        <position position="21"/>
    </location>
    <ligand>
        <name>[4Fe-4S] cluster</name>
        <dbReference type="ChEBI" id="CHEBI:49883"/>
        <label>2</label>
    </ligand>
</feature>
<feature type="binding site" evidence="2">
    <location>
        <position position="48"/>
    </location>
    <ligand>
        <name>[4Fe-4S] cluster</name>
        <dbReference type="ChEBI" id="CHEBI:49883"/>
        <label>2</label>
    </ligand>
</feature>
<feature type="binding site" evidence="2">
    <location>
        <position position="51"/>
    </location>
    <ligand>
        <name>[4Fe-4S] cluster</name>
        <dbReference type="ChEBI" id="CHEBI:49883"/>
        <label>2</label>
    </ligand>
</feature>
<feature type="binding site" evidence="2">
    <location>
        <position position="54"/>
    </location>
    <ligand>
        <name>[4Fe-4S] cluster</name>
        <dbReference type="ChEBI" id="CHEBI:49883"/>
        <label>2</label>
    </ligand>
</feature>
<feature type="binding site" evidence="2">
    <location>
        <position position="58"/>
    </location>
    <ligand>
        <name>[4Fe-4S] cluster</name>
        <dbReference type="ChEBI" id="CHEBI:49883"/>
        <label>1</label>
    </ligand>
</feature>
<name>PSAC_SECCE</name>
<accession>A1YV30</accession>
<comment type="function">
    <text evidence="2">Apoprotein for the two 4Fe-4S centers FA and FB of photosystem I (PSI); essential for photochemical activity. FB is the terminal electron acceptor of PSI, donating electrons to ferredoxin. The C-terminus interacts with PsaA/B/D and helps assemble the protein into the PSI complex. Required for binding of PsaD and PsaE to PSI. PSI is a plastocyanin-ferredoxin oxidoreductase, converting photonic excitation into a charge separation, which transfers an electron from the donor P700 chlorophyll pair to the spectroscopically characterized acceptors A0, A1, FX, FA and FB in turn.</text>
</comment>
<comment type="catalytic activity">
    <reaction evidence="2">
        <text>reduced [plastocyanin] + hnu + oxidized [2Fe-2S]-[ferredoxin] = oxidized [plastocyanin] + reduced [2Fe-2S]-[ferredoxin]</text>
        <dbReference type="Rhea" id="RHEA:30407"/>
        <dbReference type="Rhea" id="RHEA-COMP:10000"/>
        <dbReference type="Rhea" id="RHEA-COMP:10001"/>
        <dbReference type="Rhea" id="RHEA-COMP:10039"/>
        <dbReference type="Rhea" id="RHEA-COMP:10040"/>
        <dbReference type="ChEBI" id="CHEBI:29036"/>
        <dbReference type="ChEBI" id="CHEBI:30212"/>
        <dbReference type="ChEBI" id="CHEBI:33737"/>
        <dbReference type="ChEBI" id="CHEBI:33738"/>
        <dbReference type="ChEBI" id="CHEBI:49552"/>
        <dbReference type="EC" id="1.97.1.12"/>
    </reaction>
</comment>
<comment type="cofactor">
    <cofactor evidence="2">
        <name>[4Fe-4S] cluster</name>
        <dbReference type="ChEBI" id="CHEBI:49883"/>
    </cofactor>
    <text evidence="2">Binds 2 [4Fe-4S] clusters. Cluster 2 is most probably the spectroscopically characterized electron acceptor FA and cluster 1 is most probably FB.</text>
</comment>
<comment type="subunit">
    <text evidence="2">The eukaryotic PSI reaction center is composed of at least 11 subunits.</text>
</comment>
<comment type="subcellular location">
    <subcellularLocation>
        <location evidence="2">Plastid</location>
        <location evidence="2">Chloroplast thylakoid membrane</location>
        <topology evidence="2">Peripheral membrane protein</topology>
        <orientation evidence="2">Stromal side</orientation>
    </subcellularLocation>
</comment>
<proteinExistence type="inferred from homology"/>
<protein>
    <recommendedName>
        <fullName evidence="2">Photosystem I iron-sulfur center</fullName>
        <ecNumber evidence="2">1.97.1.12</ecNumber>
    </recommendedName>
    <alternativeName>
        <fullName evidence="2">9 kDa polypeptide</fullName>
    </alternativeName>
    <alternativeName>
        <fullName evidence="2">PSI-C</fullName>
    </alternativeName>
    <alternativeName>
        <fullName evidence="2">Photosystem I subunit VII</fullName>
    </alternativeName>
    <alternativeName>
        <fullName evidence="2">PsaC</fullName>
    </alternativeName>
</protein>
<geneLocation type="chloroplast"/>
<gene>
    <name evidence="2" type="primary">psaC</name>
</gene>
<evidence type="ECO:0000250" key="1"/>
<evidence type="ECO:0000255" key="2">
    <source>
        <dbReference type="HAMAP-Rule" id="MF_01303"/>
    </source>
</evidence>
<organism>
    <name type="scientific">Secale cereale</name>
    <name type="common">Rye</name>
    <dbReference type="NCBI Taxonomy" id="4550"/>
    <lineage>
        <taxon>Eukaryota</taxon>
        <taxon>Viridiplantae</taxon>
        <taxon>Streptophyta</taxon>
        <taxon>Embryophyta</taxon>
        <taxon>Tracheophyta</taxon>
        <taxon>Spermatophyta</taxon>
        <taxon>Magnoliopsida</taxon>
        <taxon>Liliopsida</taxon>
        <taxon>Poales</taxon>
        <taxon>Poaceae</taxon>
        <taxon>BOP clade</taxon>
        <taxon>Pooideae</taxon>
        <taxon>Triticodae</taxon>
        <taxon>Triticeae</taxon>
        <taxon>Hordeinae</taxon>
        <taxon>Secale</taxon>
    </lineage>
</organism>
<reference key="1">
    <citation type="submission" date="2006-11" db="EMBL/GenBank/DDBJ databases">
        <title>Sequence variation of chloroplast psaC gene region occurred in some Triticeae species.</title>
        <authorList>
            <person name="Ning S."/>
            <person name="Chen Q."/>
            <person name="Yuan Z."/>
            <person name="Zhang L."/>
            <person name="Liu D."/>
        </authorList>
    </citation>
    <scope>NUCLEOTIDE SEQUENCE [GENOMIC DNA]</scope>
</reference>
<keyword id="KW-0004">4Fe-4S</keyword>
<keyword id="KW-0150">Chloroplast</keyword>
<keyword id="KW-0249">Electron transport</keyword>
<keyword id="KW-0408">Iron</keyword>
<keyword id="KW-0411">Iron-sulfur</keyword>
<keyword id="KW-0472">Membrane</keyword>
<keyword id="KW-0479">Metal-binding</keyword>
<keyword id="KW-0560">Oxidoreductase</keyword>
<keyword id="KW-0602">Photosynthesis</keyword>
<keyword id="KW-0603">Photosystem I</keyword>
<keyword id="KW-0934">Plastid</keyword>
<keyword id="KW-0677">Repeat</keyword>
<keyword id="KW-0793">Thylakoid</keyword>
<keyword id="KW-0813">Transport</keyword>
<sequence length="81" mass="8899">MSHSVKIYDTCIGCTQCVRACPTDVLEMIPWDGCKAKQIASAPRTEDCVGCKRCESACPTDFLSVRVYLGPETTRSMALSY</sequence>